<reference key="1">
    <citation type="journal article" date="2002" name="J. Biol. Chem.">
        <title>Activation of clg, a novel dbl family guanine nucleotide exchange factor gene, by proviral insertion at evi24, a common integration site in B cell and myeloid leukemias.</title>
        <authorList>
            <person name="Himmel K.L."/>
            <person name="Bi F."/>
            <person name="Shen H."/>
            <person name="Jenkins N.A."/>
            <person name="Copeland N.G."/>
            <person name="Zheng Y."/>
            <person name="Largaespada D.A."/>
        </authorList>
    </citation>
    <scope>NUCLEOTIDE SEQUENCE [MRNA] (ISOFORM 2)</scope>
    <scope>TISSUE SPECIFICITY</scope>
    <scope>FUNCTION</scope>
    <source>
        <strain>BXH2</strain>
    </source>
</reference>
<reference key="2">
    <citation type="journal article" date="2004" name="DNA Res.">
        <title>Prediction of the coding sequences of mouse homologues of FLJ genes: the complete nucleotide sequences of 110 mouse FLJ-homologous cDNAs identified by screening of terminal sequences of cDNA clones randomly sampled from size-fractionated libraries.</title>
        <authorList>
            <person name="Okazaki N."/>
            <person name="Kikuno R."/>
            <person name="Ohara R."/>
            <person name="Inamoto S."/>
            <person name="Koseki H."/>
            <person name="Hiraoka S."/>
            <person name="Saga Y."/>
            <person name="Kitamura H."/>
            <person name="Nakagawa T."/>
            <person name="Nagase T."/>
            <person name="Ohara O."/>
            <person name="Koga H."/>
        </authorList>
    </citation>
    <scope>NUCLEOTIDE SEQUENCE [LARGE SCALE MRNA] (ISOFORM 1)</scope>
    <source>
        <tissue>Embryonic tail</tissue>
    </source>
</reference>
<reference key="3">
    <citation type="journal article" date="2004" name="Genome Res.">
        <title>The status, quality, and expansion of the NIH full-length cDNA project: the Mammalian Gene Collection (MGC).</title>
        <authorList>
            <consortium name="The MGC Project Team"/>
        </authorList>
    </citation>
    <scope>NUCLEOTIDE SEQUENCE [LARGE SCALE MRNA] (ISOFORMS 1 AND 3)</scope>
    <source>
        <strain>C57BL/6J</strain>
        <strain>FVB/N</strain>
        <tissue>Brain</tissue>
        <tissue>Mammary tumor</tissue>
    </source>
</reference>
<reference key="4">
    <citation type="journal article" date="2005" name="Science">
        <title>The transcriptional landscape of the mammalian genome.</title>
        <authorList>
            <person name="Carninci P."/>
            <person name="Kasukawa T."/>
            <person name="Katayama S."/>
            <person name="Gough J."/>
            <person name="Frith M.C."/>
            <person name="Maeda N."/>
            <person name="Oyama R."/>
            <person name="Ravasi T."/>
            <person name="Lenhard B."/>
            <person name="Wells C."/>
            <person name="Kodzius R."/>
            <person name="Shimokawa K."/>
            <person name="Bajic V.B."/>
            <person name="Brenner S.E."/>
            <person name="Batalov S."/>
            <person name="Forrest A.R."/>
            <person name="Zavolan M."/>
            <person name="Davis M.J."/>
            <person name="Wilming L.G."/>
            <person name="Aidinis V."/>
            <person name="Allen J.E."/>
            <person name="Ambesi-Impiombato A."/>
            <person name="Apweiler R."/>
            <person name="Aturaliya R.N."/>
            <person name="Bailey T.L."/>
            <person name="Bansal M."/>
            <person name="Baxter L."/>
            <person name="Beisel K.W."/>
            <person name="Bersano T."/>
            <person name="Bono H."/>
            <person name="Chalk A.M."/>
            <person name="Chiu K.P."/>
            <person name="Choudhary V."/>
            <person name="Christoffels A."/>
            <person name="Clutterbuck D.R."/>
            <person name="Crowe M.L."/>
            <person name="Dalla E."/>
            <person name="Dalrymple B.P."/>
            <person name="de Bono B."/>
            <person name="Della Gatta G."/>
            <person name="di Bernardo D."/>
            <person name="Down T."/>
            <person name="Engstrom P."/>
            <person name="Fagiolini M."/>
            <person name="Faulkner G."/>
            <person name="Fletcher C.F."/>
            <person name="Fukushima T."/>
            <person name="Furuno M."/>
            <person name="Futaki S."/>
            <person name="Gariboldi M."/>
            <person name="Georgii-Hemming P."/>
            <person name="Gingeras T.R."/>
            <person name="Gojobori T."/>
            <person name="Green R.E."/>
            <person name="Gustincich S."/>
            <person name="Harbers M."/>
            <person name="Hayashi Y."/>
            <person name="Hensch T.K."/>
            <person name="Hirokawa N."/>
            <person name="Hill D."/>
            <person name="Huminiecki L."/>
            <person name="Iacono M."/>
            <person name="Ikeo K."/>
            <person name="Iwama A."/>
            <person name="Ishikawa T."/>
            <person name="Jakt M."/>
            <person name="Kanapin A."/>
            <person name="Katoh M."/>
            <person name="Kawasawa Y."/>
            <person name="Kelso J."/>
            <person name="Kitamura H."/>
            <person name="Kitano H."/>
            <person name="Kollias G."/>
            <person name="Krishnan S.P."/>
            <person name="Kruger A."/>
            <person name="Kummerfeld S.K."/>
            <person name="Kurochkin I.V."/>
            <person name="Lareau L.F."/>
            <person name="Lazarevic D."/>
            <person name="Lipovich L."/>
            <person name="Liu J."/>
            <person name="Liuni S."/>
            <person name="McWilliam S."/>
            <person name="Madan Babu M."/>
            <person name="Madera M."/>
            <person name="Marchionni L."/>
            <person name="Matsuda H."/>
            <person name="Matsuzawa S."/>
            <person name="Miki H."/>
            <person name="Mignone F."/>
            <person name="Miyake S."/>
            <person name="Morris K."/>
            <person name="Mottagui-Tabar S."/>
            <person name="Mulder N."/>
            <person name="Nakano N."/>
            <person name="Nakauchi H."/>
            <person name="Ng P."/>
            <person name="Nilsson R."/>
            <person name="Nishiguchi S."/>
            <person name="Nishikawa S."/>
            <person name="Nori F."/>
            <person name="Ohara O."/>
            <person name="Okazaki Y."/>
            <person name="Orlando V."/>
            <person name="Pang K.C."/>
            <person name="Pavan W.J."/>
            <person name="Pavesi G."/>
            <person name="Pesole G."/>
            <person name="Petrovsky N."/>
            <person name="Piazza S."/>
            <person name="Reed J."/>
            <person name="Reid J.F."/>
            <person name="Ring B.Z."/>
            <person name="Ringwald M."/>
            <person name="Rost B."/>
            <person name="Ruan Y."/>
            <person name="Salzberg S.L."/>
            <person name="Sandelin A."/>
            <person name="Schneider C."/>
            <person name="Schoenbach C."/>
            <person name="Sekiguchi K."/>
            <person name="Semple C.A."/>
            <person name="Seno S."/>
            <person name="Sessa L."/>
            <person name="Sheng Y."/>
            <person name="Shibata Y."/>
            <person name="Shimada H."/>
            <person name="Shimada K."/>
            <person name="Silva D."/>
            <person name="Sinclair B."/>
            <person name="Sperling S."/>
            <person name="Stupka E."/>
            <person name="Sugiura K."/>
            <person name="Sultana R."/>
            <person name="Takenaka Y."/>
            <person name="Taki K."/>
            <person name="Tammoja K."/>
            <person name="Tan S.L."/>
            <person name="Tang S."/>
            <person name="Taylor M.S."/>
            <person name="Tegner J."/>
            <person name="Teichmann S.A."/>
            <person name="Ueda H.R."/>
            <person name="van Nimwegen E."/>
            <person name="Verardo R."/>
            <person name="Wei C.L."/>
            <person name="Yagi K."/>
            <person name="Yamanishi H."/>
            <person name="Zabarovsky E."/>
            <person name="Zhu S."/>
            <person name="Zimmer A."/>
            <person name="Hide W."/>
            <person name="Bult C."/>
            <person name="Grimmond S.M."/>
            <person name="Teasdale R.D."/>
            <person name="Liu E.T."/>
            <person name="Brusic V."/>
            <person name="Quackenbush J."/>
            <person name="Wahlestedt C."/>
            <person name="Mattick J.S."/>
            <person name="Hume D.A."/>
            <person name="Kai C."/>
            <person name="Sasaki D."/>
            <person name="Tomaru Y."/>
            <person name="Fukuda S."/>
            <person name="Kanamori-Katayama M."/>
            <person name="Suzuki M."/>
            <person name="Aoki J."/>
            <person name="Arakawa T."/>
            <person name="Iida J."/>
            <person name="Imamura K."/>
            <person name="Itoh M."/>
            <person name="Kato T."/>
            <person name="Kawaji H."/>
            <person name="Kawagashira N."/>
            <person name="Kawashima T."/>
            <person name="Kojima M."/>
            <person name="Kondo S."/>
            <person name="Konno H."/>
            <person name="Nakano K."/>
            <person name="Ninomiya N."/>
            <person name="Nishio T."/>
            <person name="Okada M."/>
            <person name="Plessy C."/>
            <person name="Shibata K."/>
            <person name="Shiraki T."/>
            <person name="Suzuki S."/>
            <person name="Tagami M."/>
            <person name="Waki K."/>
            <person name="Watahiki A."/>
            <person name="Okamura-Oho Y."/>
            <person name="Suzuki H."/>
            <person name="Kawai J."/>
            <person name="Hayashizaki Y."/>
        </authorList>
    </citation>
    <scope>NUCLEOTIDE SEQUENCE [LARGE SCALE MRNA] OF 1-912</scope>
</reference>
<comment type="function">
    <text evidence="1 5">May be a transforming oncogene with exchange activity for CDC42. May be a guanine-nucleotide exchange factor (GEF) for RAC1 and CDC42 (PubMed:11839748). Activated by the binding to subunits beta and gamma of the heterotrimeric guanine nucleotide-binding protein (G protein) (By similarity). Involved in the regulation of actin polymerization (By similarity).</text>
</comment>
<comment type="alternative products">
    <event type="alternative splicing"/>
    <isoform>
        <id>Q6KAU7-1</id>
        <name>1</name>
        <sequence type="displayed"/>
    </isoform>
    <isoform>
        <id>Q6KAU7-2</id>
        <name>2</name>
        <sequence type="described" ref="VSP_028531"/>
    </isoform>
    <isoform>
        <id>Q6KAU7-3</id>
        <name>3</name>
        <sequence type="described" ref="VSP_028532"/>
    </isoform>
</comment>
<comment type="tissue specificity">
    <text evidence="5">Expressed in thymus, skeletal muscle, lung, testis, uterus, pancreas and heart and also expressed during embryogenesis.</text>
</comment>
<comment type="sequence caution" evidence="8">
    <conflict type="erroneous initiation">
        <sequence resource="EMBL-CDS" id="AAH52436"/>
    </conflict>
</comment>
<comment type="sequence caution" evidence="8">
    <conflict type="erroneous initiation">
        <sequence resource="EMBL-CDS" id="AAH56971"/>
    </conflict>
</comment>
<comment type="sequence caution" evidence="8">
    <conflict type="erroneous initiation">
        <sequence resource="EMBL-CDS" id="BAD21360"/>
    </conflict>
</comment>
<name>PKHG2_MOUSE</name>
<keyword id="KW-0025">Alternative splicing</keyword>
<keyword id="KW-0344">Guanine-nucleotide releasing factor</keyword>
<keyword id="KW-0597">Phosphoprotein</keyword>
<keyword id="KW-1185">Reference proteome</keyword>
<keyword id="KW-0043">Tumor suppressor</keyword>
<accession>Q6KAU7</accession>
<accession>A0PJD9</accession>
<accession>Q3UNL4</accession>
<accession>Q6PGK2</accession>
<accession>Q7TS89</accession>
<accession>Q8R4H6</accession>
<gene>
    <name type="primary">Plekhg2</name>
</gene>
<organism>
    <name type="scientific">Mus musculus</name>
    <name type="common">Mouse</name>
    <dbReference type="NCBI Taxonomy" id="10090"/>
    <lineage>
        <taxon>Eukaryota</taxon>
        <taxon>Metazoa</taxon>
        <taxon>Chordata</taxon>
        <taxon>Craniata</taxon>
        <taxon>Vertebrata</taxon>
        <taxon>Euteleostomi</taxon>
        <taxon>Mammalia</taxon>
        <taxon>Eutheria</taxon>
        <taxon>Euarchontoglires</taxon>
        <taxon>Glires</taxon>
        <taxon>Rodentia</taxon>
        <taxon>Myomorpha</taxon>
        <taxon>Muroidea</taxon>
        <taxon>Muridae</taxon>
        <taxon>Murinae</taxon>
        <taxon>Mus</taxon>
        <taxon>Mus</taxon>
    </lineage>
</organism>
<sequence length="1340" mass="143376">MPEGARGLSLPKPSLRLGCGHQGEVCDCAAVSDTPTAQAATTMASPRGSGSSTSLSTVGSEGDPSPACSASRPEPLPEPPIRLHLLPVGIQGSVKPSRLERVAREIVETERAYVRDLRSIVEDYLGPLMDGRALGLNMEQVGTLFANIEDIYEFSSELLEDLEGCSSAGGIAECFVQRSEDFDIYTLYCMNYPSSLALLRELSVSPPATLWLQERQAQLRHSLPLQSFLLKPVQRILKYHLLLQELGKHWAEGPDSGGREMVEEAIVSMTAVAWYINDMKRKQEHAARLQEVQRRLGGWTGPELSAFGELVLEGTFRGGGGGGPRLRGGERLLFLFSRMLLVAKRRGPEYTYKGHIFCCNLSVSETPRDPLGFKVSDLTIPKHRHLFQAKNQEEKRLWIHCLQRLFFENHPASIPAKAKQVLLENSLHCAPKSKHIPEPPTSPLDSPRPRDAPGFTPGRRNPAPSPRLSGSRRGRRQSEPAKEAYVIFPQNDKPQVKHAGSEGELHPSSELQPVSASGLPEDLEDAGPPTLDPSGTSITEEILELLNQRGLRDSGPATHDIPKFPRDSRVPVESEPLPFQSLPSRESSEEEEEEDLETDEREPSPLHVLEGLEGSSAAEIPCIPSLTDIPSEVPSLPEIPEAPCLPCLSDISGVFEVPCLSPTSTVPDIPSLATTPSFPCGSWLPGPLQEAAQPQATRRELLSGSNPGRLSESPSESREGQEDDTEGVSFSAVQREAGTSVQGFPEELEYRSCSEIRSAWQALEQGQLARPGFPEPLLILEDSDLRGGSTSGKTGMPHSERSASRVRELARLYSERIQQMQRAETRASTNAPRRRPRVLAQPQPSPCPPQEEAEPGALPAFGHVLVCELAFPLNCTQESVPLGPAVLVQAATPLCIQGDDLSGQNLNVSDLSKQGHLSSNSIPPPVPLPGQSNFQNIQVPSTSLLPKQEPPDVQVPTASTLPDTSQLQSQVPAATPSAGHRNCVEIQVQSTTSLPGQECQADTVALSKQEGHEDSQNPNKAPGAEQRDVSIDQGLAVVGGRPVSPLPVCTSSPDQQIPATTPLPLSTDFPDMEGPGALPLPTQEGRPDCSIPCNPLPSLSQDVQVPAVIPVSQLQGLTDTRATVPLSSHKQEDAPECLGPEPSLTDTPAPRLLSSLGQQNTTDGPVSAAAVPLTEQGCSQDLQGLITSPVQTTMELPKPRGLVSRVATSESLDLTPPHSPSLSTRQLLGPSAAALSRYLAASYISQSLARRQGPGGEGTVASQGHWSSSAPTSRAPSPPPQPQPPAPPARRLSYATTVSIQVGGGGRLRPAKAQVRLNHPALLAAPHPGAVGPSQGPGGS</sequence>
<proteinExistence type="evidence at transcript level"/>
<dbReference type="EMBL" id="AF465238">
    <property type="protein sequence ID" value="AAL93134.1"/>
    <property type="molecule type" value="mRNA"/>
</dbReference>
<dbReference type="EMBL" id="AK131110">
    <property type="protein sequence ID" value="BAD21360.1"/>
    <property type="status" value="ALT_INIT"/>
    <property type="molecule type" value="mRNA"/>
</dbReference>
<dbReference type="EMBL" id="BC025625">
    <property type="protein sequence ID" value="AAH25625.1"/>
    <property type="molecule type" value="mRNA"/>
</dbReference>
<dbReference type="EMBL" id="BC052436">
    <property type="protein sequence ID" value="AAH52436.1"/>
    <property type="status" value="ALT_INIT"/>
    <property type="molecule type" value="mRNA"/>
</dbReference>
<dbReference type="EMBL" id="BC056971">
    <property type="protein sequence ID" value="AAH56971.1"/>
    <property type="status" value="ALT_INIT"/>
    <property type="molecule type" value="mRNA"/>
</dbReference>
<dbReference type="EMBL" id="AK144152">
    <property type="protein sequence ID" value="BAE25733.1"/>
    <property type="molecule type" value="mRNA"/>
</dbReference>
<dbReference type="CCDS" id="CCDS52162.1">
    <molecule id="Q6KAU7-1"/>
</dbReference>
<dbReference type="RefSeq" id="NP_001077381.1">
    <property type="nucleotide sequence ID" value="NM_001083912.1"/>
</dbReference>
<dbReference type="RefSeq" id="NP_001277471.1">
    <property type="nucleotide sequence ID" value="NM_001290542.1"/>
</dbReference>
<dbReference type="RefSeq" id="NP_620091.2">
    <property type="nucleotide sequence ID" value="NM_138752.2"/>
</dbReference>
<dbReference type="RefSeq" id="XP_006539504.1">
    <property type="nucleotide sequence ID" value="XM_006539441.2"/>
</dbReference>
<dbReference type="RefSeq" id="XP_006539505.1">
    <property type="nucleotide sequence ID" value="XM_006539442.3"/>
</dbReference>
<dbReference type="SMR" id="Q6KAU7"/>
<dbReference type="BioGRID" id="221673">
    <property type="interactions" value="10"/>
</dbReference>
<dbReference type="FunCoup" id="Q6KAU7">
    <property type="interactions" value="111"/>
</dbReference>
<dbReference type="IntAct" id="Q6KAU7">
    <property type="interactions" value="6"/>
</dbReference>
<dbReference type="STRING" id="10090.ENSMUSP00000092228"/>
<dbReference type="GlyGen" id="Q6KAU7">
    <property type="glycosylation" value="3 sites, 1 O-linked glycan (1 site)"/>
</dbReference>
<dbReference type="iPTMnet" id="Q6KAU7"/>
<dbReference type="PhosphoSitePlus" id="Q6KAU7"/>
<dbReference type="SwissPalm" id="Q6KAU7"/>
<dbReference type="jPOST" id="Q6KAU7"/>
<dbReference type="PaxDb" id="10090-ENSMUSP00000092228"/>
<dbReference type="ProteomicsDB" id="288222">
    <molecule id="Q6KAU7-1"/>
</dbReference>
<dbReference type="ProteomicsDB" id="288223">
    <molecule id="Q6KAU7-2"/>
</dbReference>
<dbReference type="ProteomicsDB" id="288224">
    <molecule id="Q6KAU7-3"/>
</dbReference>
<dbReference type="Pumba" id="Q6KAU7"/>
<dbReference type="DNASU" id="101497"/>
<dbReference type="GeneID" id="101497"/>
<dbReference type="KEGG" id="mmu:101497"/>
<dbReference type="AGR" id="MGI:2141874"/>
<dbReference type="CTD" id="64857"/>
<dbReference type="MGI" id="MGI:2141874">
    <property type="gene designation" value="Plekhg2"/>
</dbReference>
<dbReference type="eggNOG" id="KOG3518">
    <property type="taxonomic scope" value="Eukaryota"/>
</dbReference>
<dbReference type="InParanoid" id="Q6KAU7"/>
<dbReference type="OrthoDB" id="1594986at2759"/>
<dbReference type="Reactome" id="R-MMU-193648">
    <property type="pathway name" value="NRAGE signals death through JNK"/>
</dbReference>
<dbReference type="Reactome" id="R-MMU-416482">
    <property type="pathway name" value="G alpha (12/13) signalling events"/>
</dbReference>
<dbReference type="Reactome" id="R-MMU-9013148">
    <property type="pathway name" value="CDC42 GTPase cycle"/>
</dbReference>
<dbReference type="Reactome" id="R-MMU-9013149">
    <property type="pathway name" value="RAC1 GTPase cycle"/>
</dbReference>
<dbReference type="BioGRID-ORCS" id="101497">
    <property type="hits" value="5 hits in 78 CRISPR screens"/>
</dbReference>
<dbReference type="ChiTaRS" id="Plekhg2">
    <property type="organism name" value="mouse"/>
</dbReference>
<dbReference type="PRO" id="PR:Q6KAU7"/>
<dbReference type="Proteomes" id="UP000000589">
    <property type="component" value="Unplaced"/>
</dbReference>
<dbReference type="RNAct" id="Q6KAU7">
    <property type="molecule type" value="protein"/>
</dbReference>
<dbReference type="GO" id="GO:0005085">
    <property type="term" value="F:guanyl-nucleotide exchange factor activity"/>
    <property type="evidence" value="ECO:0007669"/>
    <property type="project" value="UniProtKB-KW"/>
</dbReference>
<dbReference type="GO" id="GO:0030833">
    <property type="term" value="P:regulation of actin filament polymerization"/>
    <property type="evidence" value="ECO:0000250"/>
    <property type="project" value="UniProtKB"/>
</dbReference>
<dbReference type="CDD" id="cd13243">
    <property type="entry name" value="PH_PLEKHG1_G2_G3"/>
    <property type="match status" value="1"/>
</dbReference>
<dbReference type="CDD" id="cd00160">
    <property type="entry name" value="RhoGEF"/>
    <property type="match status" value="1"/>
</dbReference>
<dbReference type="FunFam" id="1.20.900.10:FF:000019">
    <property type="entry name" value="Pleckstrin homology domain-containing family G member 1"/>
    <property type="match status" value="1"/>
</dbReference>
<dbReference type="FunFam" id="2.30.29.30:FF:000132">
    <property type="entry name" value="pleckstrin homology domain-containing family G member 2"/>
    <property type="match status" value="1"/>
</dbReference>
<dbReference type="Gene3D" id="1.20.900.10">
    <property type="entry name" value="Dbl homology (DH) domain"/>
    <property type="match status" value="1"/>
</dbReference>
<dbReference type="Gene3D" id="2.30.29.30">
    <property type="entry name" value="Pleckstrin-homology domain (PH domain)/Phosphotyrosine-binding domain (PTB)"/>
    <property type="match status" value="1"/>
</dbReference>
<dbReference type="InterPro" id="IPR035899">
    <property type="entry name" value="DBL_dom_sf"/>
</dbReference>
<dbReference type="InterPro" id="IPR000219">
    <property type="entry name" value="DH_dom"/>
</dbReference>
<dbReference type="InterPro" id="IPR011993">
    <property type="entry name" value="PH-like_dom_sf"/>
</dbReference>
<dbReference type="InterPro" id="IPR001849">
    <property type="entry name" value="PH_domain"/>
</dbReference>
<dbReference type="InterPro" id="IPR043324">
    <property type="entry name" value="PH_PLEKHG1_G2_G3"/>
</dbReference>
<dbReference type="InterPro" id="IPR055251">
    <property type="entry name" value="SOS1_NGEF_PH"/>
</dbReference>
<dbReference type="PANTHER" id="PTHR45924">
    <property type="entry name" value="FI17866P1"/>
    <property type="match status" value="1"/>
</dbReference>
<dbReference type="PANTHER" id="PTHR45924:SF3">
    <property type="entry name" value="PLECKSTRIN HOMOLOGY DOMAIN-CONTAINING FAMILY G MEMBER 2"/>
    <property type="match status" value="1"/>
</dbReference>
<dbReference type="Pfam" id="PF00621">
    <property type="entry name" value="RhoGEF"/>
    <property type="match status" value="1"/>
</dbReference>
<dbReference type="Pfam" id="PF22697">
    <property type="entry name" value="SOS1_NGEF_PH"/>
    <property type="match status" value="1"/>
</dbReference>
<dbReference type="SMART" id="SM00233">
    <property type="entry name" value="PH"/>
    <property type="match status" value="1"/>
</dbReference>
<dbReference type="SMART" id="SM00325">
    <property type="entry name" value="RhoGEF"/>
    <property type="match status" value="1"/>
</dbReference>
<dbReference type="SUPFAM" id="SSF48065">
    <property type="entry name" value="DBL homology domain (DH-domain)"/>
    <property type="match status" value="1"/>
</dbReference>
<dbReference type="SUPFAM" id="SSF50729">
    <property type="entry name" value="PH domain-like"/>
    <property type="match status" value="1"/>
</dbReference>
<dbReference type="PROSITE" id="PS50010">
    <property type="entry name" value="DH_2"/>
    <property type="match status" value="1"/>
</dbReference>
<dbReference type="PROSITE" id="PS50003">
    <property type="entry name" value="PH_DOMAIN"/>
    <property type="match status" value="1"/>
</dbReference>
<protein>
    <recommendedName>
        <fullName>Pleckstrin homology domain-containing family G member 2</fullName>
        <shortName>PH domain-containing family G member 2</shortName>
    </recommendedName>
    <alternativeName>
        <fullName>Common site lymphoma/leukemia guanine nucleotide exchange factor</fullName>
        <shortName>Common site lymphoma/leukemia GEF</shortName>
    </alternativeName>
</protein>
<feature type="chain" id="PRO_0000306862" description="Pleckstrin homology domain-containing family G member 2">
    <location>
        <begin position="1"/>
        <end position="1340"/>
    </location>
</feature>
<feature type="domain" description="DH" evidence="2">
    <location>
        <begin position="98"/>
        <end position="279"/>
    </location>
</feature>
<feature type="domain" description="PH" evidence="3">
    <location>
        <begin position="309"/>
        <end position="407"/>
    </location>
</feature>
<feature type="region of interest" description="Disordered" evidence="4">
    <location>
        <begin position="34"/>
        <end position="76"/>
    </location>
</feature>
<feature type="region of interest" description="Disordered" evidence="4">
    <location>
        <begin position="431"/>
        <end position="623"/>
    </location>
</feature>
<feature type="region of interest" description="Disordered" evidence="4">
    <location>
        <begin position="684"/>
        <end position="743"/>
    </location>
</feature>
<feature type="region of interest" description="Disordered" evidence="4">
    <location>
        <begin position="820"/>
        <end position="855"/>
    </location>
</feature>
<feature type="region of interest" description="Disordered" evidence="4">
    <location>
        <begin position="907"/>
        <end position="979"/>
    </location>
</feature>
<feature type="region of interest" description="Disordered" evidence="4">
    <location>
        <begin position="991"/>
        <end position="1028"/>
    </location>
</feature>
<feature type="region of interest" description="Disordered" evidence="4">
    <location>
        <begin position="1047"/>
        <end position="1069"/>
    </location>
</feature>
<feature type="region of interest" description="Disordered" evidence="4">
    <location>
        <begin position="1125"/>
        <end position="1146"/>
    </location>
</feature>
<feature type="region of interest" description="Disordered" evidence="4">
    <location>
        <begin position="1250"/>
        <end position="1340"/>
    </location>
</feature>
<feature type="compositionally biased region" description="Polar residues" evidence="4">
    <location>
        <begin position="34"/>
        <end position="44"/>
    </location>
</feature>
<feature type="compositionally biased region" description="Low complexity" evidence="4">
    <location>
        <begin position="45"/>
        <end position="62"/>
    </location>
</feature>
<feature type="compositionally biased region" description="Basic and acidic residues" evidence="4">
    <location>
        <begin position="560"/>
        <end position="572"/>
    </location>
</feature>
<feature type="compositionally biased region" description="Acidic residues" evidence="4">
    <location>
        <begin position="588"/>
        <end position="600"/>
    </location>
</feature>
<feature type="compositionally biased region" description="Polar residues" evidence="4">
    <location>
        <begin position="703"/>
        <end position="714"/>
    </location>
</feature>
<feature type="compositionally biased region" description="Polar residues" evidence="4">
    <location>
        <begin position="820"/>
        <end position="831"/>
    </location>
</feature>
<feature type="compositionally biased region" description="Polar residues" evidence="4">
    <location>
        <begin position="907"/>
        <end position="921"/>
    </location>
</feature>
<feature type="compositionally biased region" description="Polar residues" evidence="4">
    <location>
        <begin position="930"/>
        <end position="945"/>
    </location>
</feature>
<feature type="compositionally biased region" description="Polar residues" evidence="4">
    <location>
        <begin position="956"/>
        <end position="972"/>
    </location>
</feature>
<feature type="compositionally biased region" description="Polar residues" evidence="4">
    <location>
        <begin position="1049"/>
        <end position="1059"/>
    </location>
</feature>
<feature type="compositionally biased region" description="Pro residues" evidence="4">
    <location>
        <begin position="1276"/>
        <end position="1288"/>
    </location>
</feature>
<feature type="compositionally biased region" description="Low complexity" evidence="4">
    <location>
        <begin position="1319"/>
        <end position="1333"/>
    </location>
</feature>
<feature type="modified residue" description="Phosphothreonine" evidence="1">
    <location>
        <position position="441"/>
    </location>
</feature>
<feature type="modified residue" description="Phosphoserine" evidence="1">
    <location>
        <position position="446"/>
    </location>
</feature>
<feature type="modified residue" description="Phosphoserine" evidence="1">
    <location>
        <position position="465"/>
    </location>
</feature>
<feature type="modified residue" description="Phosphothreonine" evidence="1">
    <location>
        <position position="1215"/>
    </location>
</feature>
<feature type="modified residue" description="Phosphoserine" evidence="1">
    <location>
        <position position="1219"/>
    </location>
</feature>
<feature type="modified residue" description="Phosphoserine" evidence="1">
    <location>
        <position position="1269"/>
    </location>
</feature>
<feature type="splice variant" id="VSP_028531" description="In isoform 2." evidence="6">
    <location>
        <begin position="1"/>
        <end position="42"/>
    </location>
</feature>
<feature type="splice variant" id="VSP_028532" description="In isoform 3." evidence="7">
    <original>S</original>
    <variation>SGEYPPLEGDPGSQWPGLLTSFFLPP</variation>
    <location>
        <position position="478"/>
    </location>
</feature>
<feature type="sequence conflict" description="In Ref. 3; AAH56971." evidence="8" ref="3">
    <original>A</original>
    <variation>AA</variation>
    <location>
        <position position="37"/>
    </location>
</feature>
<feature type="sequence conflict" description="In Ref. 3; AAH52436/AAH56971 and 4; BAE25733." evidence="8" ref="3 4">
    <original>L</original>
    <variation>P</variation>
    <location>
        <position position="519"/>
    </location>
</feature>
<feature type="sequence conflict" description="In Ref. 3; AAH25625." evidence="8" ref="3">
    <original>AET</original>
    <variation>TRP</variation>
    <location>
        <begin position="823"/>
        <end position="825"/>
    </location>
</feature>
<evidence type="ECO:0000250" key="1">
    <source>
        <dbReference type="UniProtKB" id="Q9H7P9"/>
    </source>
</evidence>
<evidence type="ECO:0000255" key="2">
    <source>
        <dbReference type="PROSITE-ProRule" id="PRU00062"/>
    </source>
</evidence>
<evidence type="ECO:0000255" key="3">
    <source>
        <dbReference type="PROSITE-ProRule" id="PRU00145"/>
    </source>
</evidence>
<evidence type="ECO:0000256" key="4">
    <source>
        <dbReference type="SAM" id="MobiDB-lite"/>
    </source>
</evidence>
<evidence type="ECO:0000269" key="5">
    <source>
    </source>
</evidence>
<evidence type="ECO:0000303" key="6">
    <source>
    </source>
</evidence>
<evidence type="ECO:0000303" key="7">
    <source>
    </source>
</evidence>
<evidence type="ECO:0000305" key="8"/>